<name>C2AIL_RAT</name>
<protein>
    <recommendedName>
        <fullName>CDKN2AIP N-terminal-like protein</fullName>
    </recommendedName>
    <alternativeName>
        <fullName>CDKN2A-interacting protein N-terminal-like protein</fullName>
    </alternativeName>
</protein>
<keyword id="KW-0007">Acetylation</keyword>
<keyword id="KW-1185">Reference proteome</keyword>
<comment type="subunit">
    <text evidence="1">Interacts with XRN2; the interaction is direct.</text>
</comment>
<comment type="similarity">
    <text evidence="3">Belongs to the CARF family.</text>
</comment>
<evidence type="ECO:0000250" key="1">
    <source>
        <dbReference type="UniProtKB" id="Q96HQ2"/>
    </source>
</evidence>
<evidence type="ECO:0000255" key="2">
    <source>
        <dbReference type="PROSITE-ProRule" id="PRU01171"/>
    </source>
</evidence>
<evidence type="ECO:0000305" key="3"/>
<feature type="chain" id="PRO_0000325928" description="CDKN2AIP N-terminal-like protein">
    <location>
        <begin position="1"/>
        <end position="116"/>
    </location>
</feature>
<feature type="domain" description="XRN2-binding (XTBD)" evidence="2">
    <location>
        <begin position="24"/>
        <end position="116"/>
    </location>
</feature>
<feature type="modified residue" description="N-acetylmethionine" evidence="1">
    <location>
        <position position="1"/>
    </location>
</feature>
<accession>Q5RK03</accession>
<dbReference type="EMBL" id="BC086396">
    <property type="protein sequence ID" value="AAH86396.1"/>
    <property type="molecule type" value="mRNA"/>
</dbReference>
<dbReference type="RefSeq" id="NP_001008279.1">
    <property type="nucleotide sequence ID" value="NM_001008278.2"/>
</dbReference>
<dbReference type="SMR" id="Q5RK03"/>
<dbReference type="FunCoup" id="Q5RK03">
    <property type="interactions" value="1901"/>
</dbReference>
<dbReference type="STRING" id="10116.ENSRNOP00000006708"/>
<dbReference type="iPTMnet" id="Q5RK03"/>
<dbReference type="PhosphoSitePlus" id="Q5RK03"/>
<dbReference type="PaxDb" id="10116-ENSRNOP00000006708"/>
<dbReference type="Ensembl" id="ENSRNOT00000006708.5">
    <property type="protein sequence ID" value="ENSRNOP00000006708.4"/>
    <property type="gene ID" value="ENSRNOG00000005024.5"/>
</dbReference>
<dbReference type="GeneID" id="287278"/>
<dbReference type="KEGG" id="rno:287278"/>
<dbReference type="UCSC" id="RGD:1308696">
    <property type="organism name" value="rat"/>
</dbReference>
<dbReference type="AGR" id="RGD:1308696"/>
<dbReference type="CTD" id="91368"/>
<dbReference type="RGD" id="1308696">
    <property type="gene designation" value="Cdkn2aipnl"/>
</dbReference>
<dbReference type="eggNOG" id="ENOG502S4FT">
    <property type="taxonomic scope" value="Eukaryota"/>
</dbReference>
<dbReference type="GeneTree" id="ENSGT00940000157177"/>
<dbReference type="HOGENOM" id="CLU_148771_0_0_1"/>
<dbReference type="InParanoid" id="Q5RK03"/>
<dbReference type="OMA" id="SDKHWEA"/>
<dbReference type="OrthoDB" id="2359216at2759"/>
<dbReference type="PhylomeDB" id="Q5RK03"/>
<dbReference type="TreeFam" id="TF333807"/>
<dbReference type="PRO" id="PR:Q5RK03"/>
<dbReference type="Proteomes" id="UP000002494">
    <property type="component" value="Chromosome 10"/>
</dbReference>
<dbReference type="Bgee" id="ENSRNOG00000005024">
    <property type="expression patterns" value="Expressed in thymus and 20 other cell types or tissues"/>
</dbReference>
<dbReference type="InterPro" id="IPR021859">
    <property type="entry name" value="XTBD"/>
</dbReference>
<dbReference type="Pfam" id="PF11952">
    <property type="entry name" value="XTBD"/>
    <property type="match status" value="1"/>
</dbReference>
<dbReference type="PROSITE" id="PS51827">
    <property type="entry name" value="XTBD"/>
    <property type="match status" value="1"/>
</dbReference>
<proteinExistence type="inferred from homology"/>
<organism>
    <name type="scientific">Rattus norvegicus</name>
    <name type="common">Rat</name>
    <dbReference type="NCBI Taxonomy" id="10116"/>
    <lineage>
        <taxon>Eukaryota</taxon>
        <taxon>Metazoa</taxon>
        <taxon>Chordata</taxon>
        <taxon>Craniata</taxon>
        <taxon>Vertebrata</taxon>
        <taxon>Euteleostomi</taxon>
        <taxon>Mammalia</taxon>
        <taxon>Eutheria</taxon>
        <taxon>Euarchontoglires</taxon>
        <taxon>Glires</taxon>
        <taxon>Rodentia</taxon>
        <taxon>Myomorpha</taxon>
        <taxon>Muroidea</taxon>
        <taxon>Muridae</taxon>
        <taxon>Murinae</taxon>
        <taxon>Rattus</taxon>
    </lineage>
</organism>
<reference key="1">
    <citation type="journal article" date="2004" name="Genome Res.">
        <title>The status, quality, and expansion of the NIH full-length cDNA project: the Mammalian Gene Collection (MGC).</title>
        <authorList>
            <consortium name="The MGC Project Team"/>
        </authorList>
    </citation>
    <scope>NUCLEOTIDE SEQUENCE [LARGE SCALE MRNA]</scope>
    <source>
        <tissue>Ovary</tissue>
    </source>
</reference>
<sequence>MVGGEATSAVEKLVSGVRQAADFAEQFRSYSESEKQWKARMEFILRHLPDYRDPPDGGGRLDQLLSLSMVWANHLFLGCSYNKDLLDKVMEMADGIEVEDLPQFTSRSELMKKHQS</sequence>
<gene>
    <name type="primary">Cdkn2aipnl</name>
</gene>